<name>TPH2_HORSE</name>
<feature type="chain" id="PRO_0000260319" description="Tryptophan 5-hydroxylase 2">
    <location>
        <begin position="1"/>
        <end position="491"/>
    </location>
</feature>
<feature type="domain" description="ACT" evidence="5">
    <location>
        <begin position="66"/>
        <end position="141"/>
    </location>
</feature>
<feature type="region of interest" description="Disordered" evidence="6">
    <location>
        <begin position="33"/>
        <end position="63"/>
    </location>
</feature>
<feature type="binding site" evidence="1">
    <location>
        <position position="319"/>
    </location>
    <ligand>
        <name>Fe cation</name>
        <dbReference type="ChEBI" id="CHEBI:24875"/>
    </ligand>
</feature>
<feature type="binding site" evidence="1">
    <location>
        <position position="324"/>
    </location>
    <ligand>
        <name>Fe cation</name>
        <dbReference type="ChEBI" id="CHEBI:24875"/>
    </ligand>
</feature>
<feature type="binding site" evidence="1">
    <location>
        <position position="364"/>
    </location>
    <ligand>
        <name>Fe cation</name>
        <dbReference type="ChEBI" id="CHEBI:24875"/>
    </ligand>
</feature>
<feature type="modified residue" description="Phosphoserine" evidence="2">
    <location>
        <position position="19"/>
    </location>
</feature>
<reference key="1">
    <citation type="submission" date="2006-07" db="EMBL/GenBank/DDBJ databases">
        <title>Equus caballus tryptophan hydroxylase 2 (TPH2), mRNA.</title>
        <authorList>
            <person name="Momozawa Y."/>
            <person name="Takeuchi Y."/>
            <person name="Mori Y."/>
        </authorList>
    </citation>
    <scope>NUCLEOTIDE SEQUENCE [MRNA]</scope>
</reference>
<sequence>MQPAMMMFSSKYWARRGFSLDSAVPEEHQLLGNLTVNKSNSGKNDDKKGNKGSSRSETAPDSGKTAVVFSLRNEVGGLVKALKLFQEKHVNMVHIESRKSRRRSSEVEIFVDCECGKTEFNELIQLLKFQTTIVTLNPPENIWTEEEELEDVPWFPRKISELDKCSHRVLMYGSELDADHPGFKDNVYRQRRKYFVDVAMSYKYGQPIPRVEYTEEETKTWGVVFRELSRLYPTHACQEYLKNFPLLTKYCGYREDNVPQLEDVSMFLKERSGFAVRPVAGYLSPRDFLAGLAYRVFHCTQYVRHSSDPLYTPEPDTCHELLGHVPLLADPKFAQFSQEIGLASLGASDEDVQKLATCYFFTIEFGLCKQEGQLRAYGAGLLSSIGELKHALSDKACVKAFDPKTTCLQECLITTFQEAYFVSESFEEAKEKMREFAKSITRPFSVHFNPYTQSVEVLKDSRSIESVVQDLRSDLNTVCDALNKMNQYLGV</sequence>
<evidence type="ECO:0000250" key="1"/>
<evidence type="ECO:0000250" key="2">
    <source>
        <dbReference type="UniProtKB" id="Q8CGU9"/>
    </source>
</evidence>
<evidence type="ECO:0000250" key="3">
    <source>
        <dbReference type="UniProtKB" id="Q8CGV2"/>
    </source>
</evidence>
<evidence type="ECO:0000250" key="4">
    <source>
        <dbReference type="UniProtKB" id="Q8IWU9"/>
    </source>
</evidence>
<evidence type="ECO:0000255" key="5">
    <source>
        <dbReference type="PROSITE-ProRule" id="PRU01007"/>
    </source>
</evidence>
<evidence type="ECO:0000256" key="6">
    <source>
        <dbReference type="SAM" id="MobiDB-lite"/>
    </source>
</evidence>
<evidence type="ECO:0000305" key="7"/>
<dbReference type="EC" id="1.14.16.4" evidence="4"/>
<dbReference type="EMBL" id="AB264323">
    <property type="protein sequence ID" value="BAF32950.1"/>
    <property type="molecule type" value="mRNA"/>
</dbReference>
<dbReference type="RefSeq" id="NP_001075252.1">
    <property type="nucleotide sequence ID" value="NM_001081783.1"/>
</dbReference>
<dbReference type="SMR" id="Q0EAB8"/>
<dbReference type="FunCoup" id="Q0EAB8">
    <property type="interactions" value="174"/>
</dbReference>
<dbReference type="STRING" id="9796.ENSECAP00000011237"/>
<dbReference type="PaxDb" id="9796-ENSECAP00000011237"/>
<dbReference type="Ensembl" id="ENSECAT00000014095.4">
    <property type="protein sequence ID" value="ENSECAP00000011237.1"/>
    <property type="gene ID" value="ENSECAG00000013175.4"/>
</dbReference>
<dbReference type="GeneID" id="100009684"/>
<dbReference type="KEGG" id="ecb:100009684"/>
<dbReference type="CTD" id="121278"/>
<dbReference type="VGNC" id="VGNC:24431">
    <property type="gene designation" value="TPH2"/>
</dbReference>
<dbReference type="GeneTree" id="ENSGT00950000182885"/>
<dbReference type="HOGENOM" id="CLU_023198_0_0_1"/>
<dbReference type="InParanoid" id="Q0EAB8"/>
<dbReference type="OMA" id="VHFNPYT"/>
<dbReference type="OrthoDB" id="983542at2759"/>
<dbReference type="TreeFam" id="TF313327"/>
<dbReference type="UniPathway" id="UPA00846">
    <property type="reaction ID" value="UER00799"/>
</dbReference>
<dbReference type="Proteomes" id="UP000002281">
    <property type="component" value="Chromosome 28"/>
</dbReference>
<dbReference type="Bgee" id="ENSECAG00000013175">
    <property type="expression patterns" value="Expressed in blood and 5 other cell types or tissues"/>
</dbReference>
<dbReference type="GO" id="GO:0043005">
    <property type="term" value="C:neuron projection"/>
    <property type="evidence" value="ECO:0000318"/>
    <property type="project" value="GO_Central"/>
</dbReference>
<dbReference type="GO" id="GO:0005506">
    <property type="term" value="F:iron ion binding"/>
    <property type="evidence" value="ECO:0007669"/>
    <property type="project" value="InterPro"/>
</dbReference>
<dbReference type="GO" id="GO:0004510">
    <property type="term" value="F:tryptophan 5-monooxygenase activity"/>
    <property type="evidence" value="ECO:0000250"/>
    <property type="project" value="UniProtKB"/>
</dbReference>
<dbReference type="GO" id="GO:0009072">
    <property type="term" value="P:aromatic amino acid metabolic process"/>
    <property type="evidence" value="ECO:0007669"/>
    <property type="project" value="InterPro"/>
</dbReference>
<dbReference type="GO" id="GO:0042427">
    <property type="term" value="P:serotonin biosynthetic process"/>
    <property type="evidence" value="ECO:0007669"/>
    <property type="project" value="UniProtKB-UniPathway"/>
</dbReference>
<dbReference type="CDD" id="cd04929">
    <property type="entry name" value="ACT_TPH"/>
    <property type="match status" value="1"/>
</dbReference>
<dbReference type="CDD" id="cd03346">
    <property type="entry name" value="eu_TrpOH"/>
    <property type="match status" value="1"/>
</dbReference>
<dbReference type="FunFam" id="1.10.800.10:FF:000001">
    <property type="entry name" value="tryptophan 5-hydroxylase 1"/>
    <property type="match status" value="1"/>
</dbReference>
<dbReference type="Gene3D" id="1.10.800.10">
    <property type="entry name" value="Aromatic amino acid hydroxylase"/>
    <property type="match status" value="1"/>
</dbReference>
<dbReference type="InterPro" id="IPR045865">
    <property type="entry name" value="ACT-like_dom_sf"/>
</dbReference>
<dbReference type="InterPro" id="IPR002912">
    <property type="entry name" value="ACT_dom"/>
</dbReference>
<dbReference type="InterPro" id="IPR001273">
    <property type="entry name" value="ArAA_hydroxylase"/>
</dbReference>
<dbReference type="InterPro" id="IPR018301">
    <property type="entry name" value="ArAA_hydroxylase_Fe/CU_BS"/>
</dbReference>
<dbReference type="InterPro" id="IPR036951">
    <property type="entry name" value="ArAA_hydroxylase_sf"/>
</dbReference>
<dbReference type="InterPro" id="IPR036329">
    <property type="entry name" value="Aro-AA_hydroxylase_C_sf"/>
</dbReference>
<dbReference type="InterPro" id="IPR019774">
    <property type="entry name" value="Aromatic-AA_hydroxylase_C"/>
</dbReference>
<dbReference type="InterPro" id="IPR005963">
    <property type="entry name" value="Trp_5_mOase"/>
</dbReference>
<dbReference type="InterPro" id="IPR041904">
    <property type="entry name" value="TrpOH_cat"/>
</dbReference>
<dbReference type="InterPro" id="IPR019773">
    <property type="entry name" value="Tyrosine_3-monooxygenase-like"/>
</dbReference>
<dbReference type="NCBIfam" id="TIGR01270">
    <property type="entry name" value="Trp_5_monoox"/>
    <property type="match status" value="1"/>
</dbReference>
<dbReference type="PANTHER" id="PTHR11473">
    <property type="entry name" value="AROMATIC AMINO ACID HYDROXYLASE"/>
    <property type="match status" value="1"/>
</dbReference>
<dbReference type="PANTHER" id="PTHR11473:SF16">
    <property type="entry name" value="TRYPTOPHAN 5-HYDROXYLASE 2"/>
    <property type="match status" value="1"/>
</dbReference>
<dbReference type="Pfam" id="PF00351">
    <property type="entry name" value="Biopterin_H"/>
    <property type="match status" value="1"/>
</dbReference>
<dbReference type="PIRSF" id="PIRSF000336">
    <property type="entry name" value="TH"/>
    <property type="match status" value="1"/>
</dbReference>
<dbReference type="PRINTS" id="PR00372">
    <property type="entry name" value="FYWHYDRXLASE"/>
</dbReference>
<dbReference type="SUPFAM" id="SSF55021">
    <property type="entry name" value="ACT-like"/>
    <property type="match status" value="1"/>
</dbReference>
<dbReference type="SUPFAM" id="SSF56534">
    <property type="entry name" value="Aromatic aminoacid monoxygenases, catalytic and oligomerization domains"/>
    <property type="match status" value="1"/>
</dbReference>
<dbReference type="PROSITE" id="PS51671">
    <property type="entry name" value="ACT"/>
    <property type="match status" value="1"/>
</dbReference>
<dbReference type="PROSITE" id="PS00367">
    <property type="entry name" value="BH4_AAA_HYDROXYL_1"/>
    <property type="match status" value="1"/>
</dbReference>
<dbReference type="PROSITE" id="PS51410">
    <property type="entry name" value="BH4_AAA_HYDROXYL_2"/>
    <property type="match status" value="1"/>
</dbReference>
<accession>Q0EAB8</accession>
<comment type="catalytic activity">
    <reaction evidence="4">
        <text>(6R)-L-erythro-5,6,7,8-tetrahydrobiopterin + L-tryptophan + O2 = 5-hydroxy-L-tryptophan + (4aS,6R)-4a-hydroxy-L-erythro-5,6,7,8-tetrahydrobiopterin</text>
        <dbReference type="Rhea" id="RHEA:16709"/>
        <dbReference type="ChEBI" id="CHEBI:15379"/>
        <dbReference type="ChEBI" id="CHEBI:15642"/>
        <dbReference type="ChEBI" id="CHEBI:57912"/>
        <dbReference type="ChEBI" id="CHEBI:58266"/>
        <dbReference type="ChEBI" id="CHEBI:59560"/>
        <dbReference type="EC" id="1.14.16.4"/>
    </reaction>
</comment>
<comment type="cofactor">
    <cofactor evidence="1">
        <name>Fe(2+)</name>
        <dbReference type="ChEBI" id="CHEBI:29033"/>
    </cofactor>
</comment>
<comment type="pathway">
    <text>Aromatic compound metabolism; serotonin biosynthesis; serotonin from L-tryptophan: step 1/2.</text>
</comment>
<comment type="subunit">
    <text evidence="3">Interacts with DNAJC12.</text>
</comment>
<comment type="similarity">
    <text evidence="7">Belongs to the biopterin-dependent aromatic amino acid hydroxylase family.</text>
</comment>
<protein>
    <recommendedName>
        <fullName>Tryptophan 5-hydroxylase 2</fullName>
        <ecNumber evidence="4">1.14.16.4</ecNumber>
    </recommendedName>
    <alternativeName>
        <fullName>Tryptophan 5-monooxygenase 2</fullName>
    </alternativeName>
</protein>
<gene>
    <name type="primary">TPH2</name>
</gene>
<organism>
    <name type="scientific">Equus caballus</name>
    <name type="common">Horse</name>
    <dbReference type="NCBI Taxonomy" id="9796"/>
    <lineage>
        <taxon>Eukaryota</taxon>
        <taxon>Metazoa</taxon>
        <taxon>Chordata</taxon>
        <taxon>Craniata</taxon>
        <taxon>Vertebrata</taxon>
        <taxon>Euteleostomi</taxon>
        <taxon>Mammalia</taxon>
        <taxon>Eutheria</taxon>
        <taxon>Laurasiatheria</taxon>
        <taxon>Perissodactyla</taxon>
        <taxon>Equidae</taxon>
        <taxon>Equus</taxon>
    </lineage>
</organism>
<proteinExistence type="evidence at transcript level"/>
<keyword id="KW-0408">Iron</keyword>
<keyword id="KW-0479">Metal-binding</keyword>
<keyword id="KW-0503">Monooxygenase</keyword>
<keyword id="KW-0560">Oxidoreductase</keyword>
<keyword id="KW-0597">Phosphoprotein</keyword>
<keyword id="KW-1185">Reference proteome</keyword>
<keyword id="KW-0724">Serotonin biosynthesis</keyword>